<keyword id="KW-0963">Cytoplasm</keyword>
<keyword id="KW-0460">Magnesium</keyword>
<keyword id="KW-0479">Metal-binding</keyword>
<keyword id="KW-0548">Nucleotidyltransferase</keyword>
<keyword id="KW-0694">RNA-binding</keyword>
<keyword id="KW-0808">Transferase</keyword>
<protein>
    <recommendedName>
        <fullName evidence="1">Polyribonucleotide nucleotidyltransferase</fullName>
        <ecNumber evidence="1">2.7.7.8</ecNumber>
    </recommendedName>
    <alternativeName>
        <fullName evidence="1">Polynucleotide phosphorylase</fullName>
        <shortName evidence="1">PNPase</shortName>
    </alternativeName>
</protein>
<dbReference type="EC" id="2.7.7.8" evidence="1"/>
<dbReference type="EMBL" id="BA000018">
    <property type="protein sequence ID" value="BAB42369.1"/>
    <property type="molecule type" value="Genomic_DNA"/>
</dbReference>
<dbReference type="PIR" id="E89901">
    <property type="entry name" value="E89901"/>
</dbReference>
<dbReference type="RefSeq" id="WP_000076690.1">
    <property type="nucleotide sequence ID" value="NC_002745.2"/>
</dbReference>
<dbReference type="SMR" id="Q7A5X7"/>
<dbReference type="EnsemblBacteria" id="BAB42369">
    <property type="protein sequence ID" value="BAB42369"/>
    <property type="gene ID" value="BAB42369"/>
</dbReference>
<dbReference type="KEGG" id="sau:SA1117"/>
<dbReference type="HOGENOM" id="CLU_004217_2_2_9"/>
<dbReference type="BRENDA" id="2.7.7.8">
    <property type="organism ID" value="3352"/>
</dbReference>
<dbReference type="GO" id="GO:0005829">
    <property type="term" value="C:cytosol"/>
    <property type="evidence" value="ECO:0007669"/>
    <property type="project" value="TreeGrafter"/>
</dbReference>
<dbReference type="GO" id="GO:0000175">
    <property type="term" value="F:3'-5'-RNA exonuclease activity"/>
    <property type="evidence" value="ECO:0007669"/>
    <property type="project" value="TreeGrafter"/>
</dbReference>
<dbReference type="GO" id="GO:0000287">
    <property type="term" value="F:magnesium ion binding"/>
    <property type="evidence" value="ECO:0007669"/>
    <property type="project" value="UniProtKB-UniRule"/>
</dbReference>
<dbReference type="GO" id="GO:0004654">
    <property type="term" value="F:polyribonucleotide nucleotidyltransferase activity"/>
    <property type="evidence" value="ECO:0007669"/>
    <property type="project" value="UniProtKB-UniRule"/>
</dbReference>
<dbReference type="GO" id="GO:0003723">
    <property type="term" value="F:RNA binding"/>
    <property type="evidence" value="ECO:0007669"/>
    <property type="project" value="UniProtKB-UniRule"/>
</dbReference>
<dbReference type="GO" id="GO:0006402">
    <property type="term" value="P:mRNA catabolic process"/>
    <property type="evidence" value="ECO:0007669"/>
    <property type="project" value="UniProtKB-UniRule"/>
</dbReference>
<dbReference type="GO" id="GO:0006396">
    <property type="term" value="P:RNA processing"/>
    <property type="evidence" value="ECO:0007669"/>
    <property type="project" value="InterPro"/>
</dbReference>
<dbReference type="CDD" id="cd02393">
    <property type="entry name" value="KH-I_PNPase"/>
    <property type="match status" value="1"/>
</dbReference>
<dbReference type="CDD" id="cd11363">
    <property type="entry name" value="RNase_PH_PNPase_1"/>
    <property type="match status" value="1"/>
</dbReference>
<dbReference type="CDD" id="cd11364">
    <property type="entry name" value="RNase_PH_PNPase_2"/>
    <property type="match status" value="1"/>
</dbReference>
<dbReference type="CDD" id="cd04472">
    <property type="entry name" value="S1_PNPase"/>
    <property type="match status" value="1"/>
</dbReference>
<dbReference type="FunFam" id="2.40.50.140:FF:000023">
    <property type="entry name" value="Polyribonucleotide nucleotidyltransferase"/>
    <property type="match status" value="1"/>
</dbReference>
<dbReference type="FunFam" id="3.30.1370.10:FF:000001">
    <property type="entry name" value="Polyribonucleotide nucleotidyltransferase"/>
    <property type="match status" value="1"/>
</dbReference>
<dbReference type="FunFam" id="3.30.230.70:FF:000001">
    <property type="entry name" value="Polyribonucleotide nucleotidyltransferase"/>
    <property type="match status" value="1"/>
</dbReference>
<dbReference type="FunFam" id="3.30.230.70:FF:000002">
    <property type="entry name" value="Polyribonucleotide nucleotidyltransferase"/>
    <property type="match status" value="1"/>
</dbReference>
<dbReference type="Gene3D" id="3.30.230.70">
    <property type="entry name" value="GHMP Kinase, N-terminal domain"/>
    <property type="match status" value="2"/>
</dbReference>
<dbReference type="Gene3D" id="3.30.1370.10">
    <property type="entry name" value="K Homology domain, type 1"/>
    <property type="match status" value="1"/>
</dbReference>
<dbReference type="Gene3D" id="2.40.50.140">
    <property type="entry name" value="Nucleic acid-binding proteins"/>
    <property type="match status" value="1"/>
</dbReference>
<dbReference type="HAMAP" id="MF_01595">
    <property type="entry name" value="PNPase"/>
    <property type="match status" value="1"/>
</dbReference>
<dbReference type="InterPro" id="IPR001247">
    <property type="entry name" value="ExoRNase_PH_dom1"/>
</dbReference>
<dbReference type="InterPro" id="IPR015847">
    <property type="entry name" value="ExoRNase_PH_dom2"/>
</dbReference>
<dbReference type="InterPro" id="IPR036345">
    <property type="entry name" value="ExoRNase_PH_dom2_sf"/>
</dbReference>
<dbReference type="InterPro" id="IPR004087">
    <property type="entry name" value="KH_dom"/>
</dbReference>
<dbReference type="InterPro" id="IPR004088">
    <property type="entry name" value="KH_dom_type_1"/>
</dbReference>
<dbReference type="InterPro" id="IPR036612">
    <property type="entry name" value="KH_dom_type_1_sf"/>
</dbReference>
<dbReference type="InterPro" id="IPR012340">
    <property type="entry name" value="NA-bd_OB-fold"/>
</dbReference>
<dbReference type="InterPro" id="IPR012162">
    <property type="entry name" value="PNPase"/>
</dbReference>
<dbReference type="InterPro" id="IPR027408">
    <property type="entry name" value="PNPase/RNase_PH_dom_sf"/>
</dbReference>
<dbReference type="InterPro" id="IPR015848">
    <property type="entry name" value="PNPase_PH_RNA-bd_bac/org-type"/>
</dbReference>
<dbReference type="InterPro" id="IPR036456">
    <property type="entry name" value="PNPase_PH_RNA-bd_sf"/>
</dbReference>
<dbReference type="InterPro" id="IPR020568">
    <property type="entry name" value="Ribosomal_Su5_D2-typ_SF"/>
</dbReference>
<dbReference type="InterPro" id="IPR003029">
    <property type="entry name" value="S1_domain"/>
</dbReference>
<dbReference type="NCBIfam" id="TIGR03591">
    <property type="entry name" value="polynuc_phos"/>
    <property type="match status" value="1"/>
</dbReference>
<dbReference type="NCBIfam" id="NF008805">
    <property type="entry name" value="PRK11824.1"/>
    <property type="match status" value="1"/>
</dbReference>
<dbReference type="PANTHER" id="PTHR11252">
    <property type="entry name" value="POLYRIBONUCLEOTIDE NUCLEOTIDYLTRANSFERASE"/>
    <property type="match status" value="1"/>
</dbReference>
<dbReference type="PANTHER" id="PTHR11252:SF0">
    <property type="entry name" value="POLYRIBONUCLEOTIDE NUCLEOTIDYLTRANSFERASE 1, MITOCHONDRIAL"/>
    <property type="match status" value="1"/>
</dbReference>
<dbReference type="Pfam" id="PF00013">
    <property type="entry name" value="KH_1"/>
    <property type="match status" value="1"/>
</dbReference>
<dbReference type="Pfam" id="PF03726">
    <property type="entry name" value="PNPase"/>
    <property type="match status" value="1"/>
</dbReference>
<dbReference type="Pfam" id="PF01138">
    <property type="entry name" value="RNase_PH"/>
    <property type="match status" value="2"/>
</dbReference>
<dbReference type="Pfam" id="PF03725">
    <property type="entry name" value="RNase_PH_C"/>
    <property type="match status" value="2"/>
</dbReference>
<dbReference type="Pfam" id="PF00575">
    <property type="entry name" value="S1"/>
    <property type="match status" value="1"/>
</dbReference>
<dbReference type="PIRSF" id="PIRSF005499">
    <property type="entry name" value="PNPase"/>
    <property type="match status" value="1"/>
</dbReference>
<dbReference type="SMART" id="SM00322">
    <property type="entry name" value="KH"/>
    <property type="match status" value="1"/>
</dbReference>
<dbReference type="SMART" id="SM00316">
    <property type="entry name" value="S1"/>
    <property type="match status" value="1"/>
</dbReference>
<dbReference type="SUPFAM" id="SSF54791">
    <property type="entry name" value="Eukaryotic type KH-domain (KH-domain type I)"/>
    <property type="match status" value="1"/>
</dbReference>
<dbReference type="SUPFAM" id="SSF50249">
    <property type="entry name" value="Nucleic acid-binding proteins"/>
    <property type="match status" value="1"/>
</dbReference>
<dbReference type="SUPFAM" id="SSF46915">
    <property type="entry name" value="Polynucleotide phosphorylase/guanosine pentaphosphate synthase (PNPase/GPSI), domain 3"/>
    <property type="match status" value="1"/>
</dbReference>
<dbReference type="SUPFAM" id="SSF55666">
    <property type="entry name" value="Ribonuclease PH domain 2-like"/>
    <property type="match status" value="2"/>
</dbReference>
<dbReference type="SUPFAM" id="SSF54211">
    <property type="entry name" value="Ribosomal protein S5 domain 2-like"/>
    <property type="match status" value="2"/>
</dbReference>
<dbReference type="PROSITE" id="PS50084">
    <property type="entry name" value="KH_TYPE_1"/>
    <property type="match status" value="1"/>
</dbReference>
<dbReference type="PROSITE" id="PS50126">
    <property type="entry name" value="S1"/>
    <property type="match status" value="1"/>
</dbReference>
<organism>
    <name type="scientific">Staphylococcus aureus (strain N315)</name>
    <dbReference type="NCBI Taxonomy" id="158879"/>
    <lineage>
        <taxon>Bacteria</taxon>
        <taxon>Bacillati</taxon>
        <taxon>Bacillota</taxon>
        <taxon>Bacilli</taxon>
        <taxon>Bacillales</taxon>
        <taxon>Staphylococcaceae</taxon>
        <taxon>Staphylococcus</taxon>
    </lineage>
</organism>
<feature type="chain" id="PRO_0000260059" description="Polyribonucleotide nucleotidyltransferase">
    <location>
        <begin position="1"/>
        <end position="698"/>
    </location>
</feature>
<feature type="domain" description="KH" evidence="1">
    <location>
        <begin position="557"/>
        <end position="616"/>
    </location>
</feature>
<feature type="domain" description="S1 motif" evidence="1">
    <location>
        <begin position="626"/>
        <end position="694"/>
    </location>
</feature>
<feature type="binding site" evidence="1">
    <location>
        <position position="490"/>
    </location>
    <ligand>
        <name>Mg(2+)</name>
        <dbReference type="ChEBI" id="CHEBI:18420"/>
    </ligand>
</feature>
<feature type="binding site" evidence="1">
    <location>
        <position position="496"/>
    </location>
    <ligand>
        <name>Mg(2+)</name>
        <dbReference type="ChEBI" id="CHEBI:18420"/>
    </ligand>
</feature>
<evidence type="ECO:0000255" key="1">
    <source>
        <dbReference type="HAMAP-Rule" id="MF_01595"/>
    </source>
</evidence>
<sequence length="698" mass="77362">MSQEKKVFKTEWAGRSLTIETGQLAKQANGAVLVRYGDTVVLSTATASKEPRDGDFFPLTVNYEEKMYAAGKIPGGFKKREGRPGDDATLTARLIDRPIRPLFPKGYKHDVQIMNMVLSADPDCSPQMAAMIGSSMALSVSDIPFQGPIAGVNVGYIDGKYIINPTVEEKEVSRLDLEVAGHKDAVNMVEAGASEITEQEMLEAIFFGHEEIQRLVDFQQQIVDHIQPVKQEFIPAERDEALVERVKSLTEEKGLKETVLTFDKQQRDENLDNLKEEIVNEFIDEEDPENELLIKEVYAILNELVKEEVRRLIADEKIRPDGRKPDEIRPLDSEVGILPRTHGSGLFTRGQTQALSVLTLGALGDYQLIDGLGPEEEKRFMHHYNFPNFSVGETGPVRAPGRREIGHGALGERALKYIIPDTADFPYTIRIVSEVLESNGSSSQASICGSTLALMDAGVPIKAPVAGIAMGLVTREDSYTILTDIQGMEDALGDMDFKVAGTKEGITAIQMDIKIDGLTREIIEEALEQARRGRLEIMNHMLQTIDQPRTELSAYAPKVVTMTIKPDKIRDVIGPGGKKINEIIDETGVKLDIEQDGTIFIGAVDQAMINRAREIIEEITREAEVGQTYQATVKRIEKYGAFVGLFPGKDALLHISQISKNRIEKVEDVLKIGDTIEVKITEIDKQGRVNASHRALEE</sequence>
<accession>Q7A5X7</accession>
<proteinExistence type="evidence at protein level"/>
<reference key="1">
    <citation type="journal article" date="2001" name="Lancet">
        <title>Whole genome sequencing of meticillin-resistant Staphylococcus aureus.</title>
        <authorList>
            <person name="Kuroda M."/>
            <person name="Ohta T."/>
            <person name="Uchiyama I."/>
            <person name="Baba T."/>
            <person name="Yuzawa H."/>
            <person name="Kobayashi I."/>
            <person name="Cui L."/>
            <person name="Oguchi A."/>
            <person name="Aoki K."/>
            <person name="Nagai Y."/>
            <person name="Lian J.-Q."/>
            <person name="Ito T."/>
            <person name="Kanamori M."/>
            <person name="Matsumaru H."/>
            <person name="Maruyama A."/>
            <person name="Murakami H."/>
            <person name="Hosoyama A."/>
            <person name="Mizutani-Ui Y."/>
            <person name="Takahashi N.K."/>
            <person name="Sawano T."/>
            <person name="Inoue R."/>
            <person name="Kaito C."/>
            <person name="Sekimizu K."/>
            <person name="Hirakawa H."/>
            <person name="Kuhara S."/>
            <person name="Goto S."/>
            <person name="Yabuzaki J."/>
            <person name="Kanehisa M."/>
            <person name="Yamashita A."/>
            <person name="Oshima K."/>
            <person name="Furuya K."/>
            <person name="Yoshino C."/>
            <person name="Shiba T."/>
            <person name="Hattori M."/>
            <person name="Ogasawara N."/>
            <person name="Hayashi H."/>
            <person name="Hiramatsu K."/>
        </authorList>
    </citation>
    <scope>NUCLEOTIDE SEQUENCE [LARGE SCALE GENOMIC DNA]</scope>
    <source>
        <strain>N315</strain>
    </source>
</reference>
<reference key="2">
    <citation type="submission" date="2007-10" db="UniProtKB">
        <title>Shotgun proteomic analysis of total and membrane protein extracts of S. aureus strain N315.</title>
        <authorList>
            <person name="Vaezzadeh A.R."/>
            <person name="Deshusses J."/>
            <person name="Lescuyer P."/>
            <person name="Hochstrasser D.F."/>
        </authorList>
    </citation>
    <scope>IDENTIFICATION BY MASS SPECTROMETRY [LARGE SCALE ANALYSIS]</scope>
    <source>
        <strain>N315</strain>
    </source>
</reference>
<comment type="function">
    <text evidence="1">Involved in mRNA degradation. Catalyzes the phosphorolysis of single-stranded polyribonucleotides processively in the 3'- to 5'-direction.</text>
</comment>
<comment type="catalytic activity">
    <reaction evidence="1">
        <text>RNA(n+1) + phosphate = RNA(n) + a ribonucleoside 5'-diphosphate</text>
        <dbReference type="Rhea" id="RHEA:22096"/>
        <dbReference type="Rhea" id="RHEA-COMP:14527"/>
        <dbReference type="Rhea" id="RHEA-COMP:17342"/>
        <dbReference type="ChEBI" id="CHEBI:43474"/>
        <dbReference type="ChEBI" id="CHEBI:57930"/>
        <dbReference type="ChEBI" id="CHEBI:140395"/>
        <dbReference type="EC" id="2.7.7.8"/>
    </reaction>
</comment>
<comment type="cofactor">
    <cofactor evidence="1">
        <name>Mg(2+)</name>
        <dbReference type="ChEBI" id="CHEBI:18420"/>
    </cofactor>
</comment>
<comment type="subcellular location">
    <subcellularLocation>
        <location evidence="1">Cytoplasm</location>
    </subcellularLocation>
</comment>
<comment type="similarity">
    <text evidence="1">Belongs to the polyribonucleotide nucleotidyltransferase family.</text>
</comment>
<name>PNP_STAAN</name>
<gene>
    <name evidence="1" type="primary">pnp</name>
    <name type="synonym">pnpA</name>
    <name type="ordered locus">SA1117</name>
</gene>